<proteinExistence type="evidence at protein level"/>
<protein>
    <recommendedName>
        <fullName evidence="3">Uncharacterized protein YBR126W-A</fullName>
    </recommendedName>
</protein>
<accession>Q8TGU7</accession>
<accession>I2HB53</accession>
<evidence type="ECO:0000255" key="1"/>
<evidence type="ECO:0000269" key="2">
    <source>
    </source>
</evidence>
<evidence type="ECO:0000305" key="3"/>
<evidence type="ECO:0000312" key="4">
    <source>
        <dbReference type="SGD" id="S000028600"/>
    </source>
</evidence>
<sequence length="68" mass="7759">MAITPDKQKKEQQHQPQNGPLDYAHICKCIAMFFVVAGVVLMFFETGLDPEQKEQIKRLHQLDGIPHA</sequence>
<dbReference type="EMBL" id="Z35995">
    <property type="status" value="NOT_ANNOTATED_CDS"/>
    <property type="molecule type" value="Genomic_DNA"/>
</dbReference>
<dbReference type="EMBL" id="Z35996">
    <property type="status" value="NOT_ANNOTATED_CDS"/>
    <property type="molecule type" value="Genomic_DNA"/>
</dbReference>
<dbReference type="EMBL" id="AF479888">
    <property type="protein sequence ID" value="AAL79201.1"/>
    <property type="molecule type" value="Genomic_DNA"/>
</dbReference>
<dbReference type="EMBL" id="BK006936">
    <property type="protein sequence ID" value="DAA35095.1"/>
    <property type="molecule type" value="Genomic_DNA"/>
</dbReference>
<dbReference type="SMR" id="Q8TGU7"/>
<dbReference type="BioGRID" id="4312349">
    <property type="interactions" value="3"/>
</dbReference>
<dbReference type="FunCoup" id="Q8TGU7">
    <property type="interactions" value="2"/>
</dbReference>
<dbReference type="IntAct" id="Q8TGU7">
    <property type="interactions" value="2"/>
</dbReference>
<dbReference type="STRING" id="4932.YBR126W-A"/>
<dbReference type="iPTMnet" id="Q8TGU7"/>
<dbReference type="PaxDb" id="4932-YBR126W-A"/>
<dbReference type="PeptideAtlas" id="Q8TGU7"/>
<dbReference type="EnsemblFungi" id="YBR126W-A_mRNA">
    <property type="protein sequence ID" value="YBR126W-A"/>
    <property type="gene ID" value="YBR126W-A"/>
</dbReference>
<dbReference type="KEGG" id="sce:YBR126W-A"/>
<dbReference type="AGR" id="SGD:S000028600"/>
<dbReference type="SGD" id="S000028600">
    <property type="gene designation" value="YBR126W-A"/>
</dbReference>
<dbReference type="VEuPathDB" id="FungiDB:YBR126W-A"/>
<dbReference type="HOGENOM" id="CLU_2795384_0_0_1"/>
<dbReference type="InParanoid" id="Q8TGU7"/>
<dbReference type="OrthoDB" id="4037062at2759"/>
<dbReference type="BioCyc" id="YEAST:G3O-29263-MONOMER"/>
<dbReference type="BioGRID-ORCS" id="13393614">
    <property type="hits" value="10 hits in 10 CRISPR screens"/>
</dbReference>
<dbReference type="PRO" id="PR:Q8TGU7"/>
<dbReference type="Proteomes" id="UP000002311">
    <property type="component" value="Chromosome II"/>
</dbReference>
<dbReference type="RNAct" id="Q8TGU7">
    <property type="molecule type" value="protein"/>
</dbReference>
<dbReference type="GO" id="GO:0005783">
    <property type="term" value="C:endoplasmic reticulum"/>
    <property type="evidence" value="ECO:0007005"/>
    <property type="project" value="SGD"/>
</dbReference>
<dbReference type="GO" id="GO:0016020">
    <property type="term" value="C:membrane"/>
    <property type="evidence" value="ECO:0007669"/>
    <property type="project" value="UniProtKB-SubCell"/>
</dbReference>
<dbReference type="Pfam" id="PF23484">
    <property type="entry name" value="YBR126W-A"/>
    <property type="match status" value="1"/>
</dbReference>
<keyword id="KW-0256">Endoplasmic reticulum</keyword>
<keyword id="KW-0472">Membrane</keyword>
<keyword id="KW-1185">Reference proteome</keyword>
<keyword id="KW-0812">Transmembrane</keyword>
<keyword id="KW-1133">Transmembrane helix</keyword>
<feature type="chain" id="PRO_0000299747" description="Uncharacterized protein YBR126W-A">
    <location>
        <begin position="1"/>
        <end position="68"/>
    </location>
</feature>
<feature type="transmembrane region" description="Helical" evidence="1">
    <location>
        <begin position="24"/>
        <end position="44"/>
    </location>
</feature>
<gene>
    <name evidence="4" type="ordered locus">YBR126W-A</name>
</gene>
<comment type="subcellular location">
    <subcellularLocation>
        <location evidence="2">Endoplasmic reticulum</location>
    </subcellularLocation>
    <subcellularLocation>
        <location evidence="1">Membrane</location>
        <topology evidence="1">Single-pass membrane protein</topology>
    </subcellularLocation>
</comment>
<organism>
    <name type="scientific">Saccharomyces cerevisiae (strain ATCC 204508 / S288c)</name>
    <name type="common">Baker's yeast</name>
    <dbReference type="NCBI Taxonomy" id="559292"/>
    <lineage>
        <taxon>Eukaryota</taxon>
        <taxon>Fungi</taxon>
        <taxon>Dikarya</taxon>
        <taxon>Ascomycota</taxon>
        <taxon>Saccharomycotina</taxon>
        <taxon>Saccharomycetes</taxon>
        <taxon>Saccharomycetales</taxon>
        <taxon>Saccharomycetaceae</taxon>
        <taxon>Saccharomyces</taxon>
    </lineage>
</organism>
<name>YB126_YEAST</name>
<reference key="1">
    <citation type="journal article" date="1994" name="EMBO J.">
        <title>Complete DNA sequence of yeast chromosome II.</title>
        <authorList>
            <person name="Feldmann H."/>
            <person name="Aigle M."/>
            <person name="Aljinovic G."/>
            <person name="Andre B."/>
            <person name="Baclet M.C."/>
            <person name="Barthe C."/>
            <person name="Baur A."/>
            <person name="Becam A.-M."/>
            <person name="Biteau N."/>
            <person name="Boles E."/>
            <person name="Brandt T."/>
            <person name="Brendel M."/>
            <person name="Brueckner M."/>
            <person name="Bussereau F."/>
            <person name="Christiansen C."/>
            <person name="Contreras R."/>
            <person name="Crouzet M."/>
            <person name="Cziepluch C."/>
            <person name="Demolis N."/>
            <person name="Delaveau T."/>
            <person name="Doignon F."/>
            <person name="Domdey H."/>
            <person name="Duesterhus S."/>
            <person name="Dubois E."/>
            <person name="Dujon B."/>
            <person name="El Bakkoury M."/>
            <person name="Entian K.-D."/>
            <person name="Feuermann M."/>
            <person name="Fiers W."/>
            <person name="Fobo G.M."/>
            <person name="Fritz C."/>
            <person name="Gassenhuber J."/>
            <person name="Glansdorff N."/>
            <person name="Goffeau A."/>
            <person name="Grivell L.A."/>
            <person name="de Haan M."/>
            <person name="Hein C."/>
            <person name="Herbert C.J."/>
            <person name="Hollenberg C.P."/>
            <person name="Holmstroem K."/>
            <person name="Jacq C."/>
            <person name="Jacquet M."/>
            <person name="Jauniaux J.-C."/>
            <person name="Jonniaux J.-L."/>
            <person name="Kallesoee T."/>
            <person name="Kiesau P."/>
            <person name="Kirchrath L."/>
            <person name="Koetter P."/>
            <person name="Korol S."/>
            <person name="Liebl S."/>
            <person name="Logghe M."/>
            <person name="Lohan A.J.E."/>
            <person name="Louis E.J."/>
            <person name="Li Z.Y."/>
            <person name="Maat M.J."/>
            <person name="Mallet L."/>
            <person name="Mannhaupt G."/>
            <person name="Messenguy F."/>
            <person name="Miosga T."/>
            <person name="Molemans F."/>
            <person name="Mueller S."/>
            <person name="Nasr F."/>
            <person name="Obermaier B."/>
            <person name="Perea J."/>
            <person name="Pierard A."/>
            <person name="Piravandi E."/>
            <person name="Pohl F.M."/>
            <person name="Pohl T.M."/>
            <person name="Potier S."/>
            <person name="Proft M."/>
            <person name="Purnelle B."/>
            <person name="Ramezani Rad M."/>
            <person name="Rieger M."/>
            <person name="Rose M."/>
            <person name="Schaaff-Gerstenschlaeger I."/>
            <person name="Scherens B."/>
            <person name="Schwarzlose C."/>
            <person name="Skala J."/>
            <person name="Slonimski P.P."/>
            <person name="Smits P.H.M."/>
            <person name="Souciet J.-L."/>
            <person name="Steensma H.Y."/>
            <person name="Stucka R."/>
            <person name="Urrestarazu L.A."/>
            <person name="van der Aart Q.J.M."/>
            <person name="Van Dyck L."/>
            <person name="Vassarotti A."/>
            <person name="Vetter I."/>
            <person name="Vierendeels F."/>
            <person name="Vissers S."/>
            <person name="Wagner G."/>
            <person name="de Wergifosse P."/>
            <person name="Wolfe K.H."/>
            <person name="Zagulski M."/>
            <person name="Zimmermann F.K."/>
            <person name="Mewes H.-W."/>
            <person name="Kleine K."/>
        </authorList>
    </citation>
    <scope>NUCLEOTIDE SEQUENCE [LARGE SCALE GENOMIC DNA]</scope>
    <source>
        <strain>ATCC 204508 / S288c</strain>
    </source>
</reference>
<reference key="2">
    <citation type="journal article" date="2014" name="G3 (Bethesda)">
        <title>The reference genome sequence of Saccharomyces cerevisiae: Then and now.</title>
        <authorList>
            <person name="Engel S.R."/>
            <person name="Dietrich F.S."/>
            <person name="Fisk D.G."/>
            <person name="Binkley G."/>
            <person name="Balakrishnan R."/>
            <person name="Costanzo M.C."/>
            <person name="Dwight S.S."/>
            <person name="Hitz B.C."/>
            <person name="Karra K."/>
            <person name="Nash R.S."/>
            <person name="Weng S."/>
            <person name="Wong E.D."/>
            <person name="Lloyd P."/>
            <person name="Skrzypek M.S."/>
            <person name="Miyasato S.R."/>
            <person name="Simison M."/>
            <person name="Cherry J.M."/>
        </authorList>
    </citation>
    <scope>GENOME REANNOTATION</scope>
    <source>
        <strain>ATCC 204508 / S288c</strain>
    </source>
</reference>
<reference key="3">
    <citation type="journal article" date="2002" name="Nat. Biotechnol.">
        <title>An integrated approach for finding overlooked genes in yeast.</title>
        <authorList>
            <person name="Kumar A."/>
            <person name="Harrison P.M."/>
            <person name="Cheung K.-H."/>
            <person name="Lan N."/>
            <person name="Echols N."/>
            <person name="Bertone P."/>
            <person name="Miller P."/>
            <person name="Gerstein M.B."/>
            <person name="Snyder M."/>
        </authorList>
    </citation>
    <scope>NUCLEOTIDE SEQUENCE [GENOMIC DNA]</scope>
</reference>
<reference key="4">
    <citation type="journal article" date="2012" name="Science">
        <title>High-resolution view of the yeast meiotic program revealed by ribosome profiling.</title>
        <authorList>
            <person name="Brar G.A."/>
            <person name="Yassour M."/>
            <person name="Friedman N."/>
            <person name="Regev A."/>
            <person name="Ingolia N.T."/>
            <person name="Weissman J.S."/>
        </authorList>
    </citation>
    <scope>IDENTIFICATION</scope>
</reference>
<reference key="5">
    <citation type="journal article" date="2016" name="Nat. Methods">
        <title>One library to make them all: streamlining the creation of yeast libraries via a SWAp-Tag strategy.</title>
        <authorList>
            <person name="Yofe I."/>
            <person name="Weill U."/>
            <person name="Meurer M."/>
            <person name="Chuartzman S."/>
            <person name="Zalckvar E."/>
            <person name="Goldman O."/>
            <person name="Ben-Dor S."/>
            <person name="Schuetze C."/>
            <person name="Wiedemann N."/>
            <person name="Knop M."/>
            <person name="Khmelinskii A."/>
            <person name="Schuldiner M."/>
        </authorList>
    </citation>
    <scope>SUBCELLULAR LOCATION</scope>
</reference>
<reference key="6">
    <citation type="journal article" date="2018" name="J. Proteome Res.">
        <title>Enrichment-based proteogenomics identifies microproteins, missing proteins, and novel smORFs in Saccharomyces cerevisiae.</title>
        <authorList>
            <person name="He C."/>
            <person name="Jia C."/>
            <person name="Zhang Y."/>
            <person name="Xu P."/>
        </authorList>
    </citation>
    <scope>IDENTIFICATION BY MASS SPECTROMETRY</scope>
</reference>